<comment type="function">
    <text evidence="6">Cell adhesion molecule that promotes cell-cell contacts and plays important roles in the development of the nervous system. Acts by forming homophilic or heterophilic trans-dimers.</text>
</comment>
<comment type="subunit">
    <text evidence="1">Cis- and trans-homodimer. Can form trans-heterodimers.</text>
</comment>
<comment type="subcellular location">
    <subcellularLocation>
        <location evidence="1">Cell membrane</location>
        <topology evidence="2">Single-pass type I membrane protein</topology>
    </subcellularLocation>
    <subcellularLocation>
        <location evidence="1">Cell junction</location>
        <location evidence="1">Adherens junction</location>
    </subcellularLocation>
</comment>
<comment type="tissue specificity">
    <text evidence="5">Expressed in the developing eye and nervous system.</text>
</comment>
<comment type="developmental stage">
    <text evidence="5">During development, expression in ganglion cells and inner nuclear neurons is first found in the anterior neural keel and later in the optic cup (PubMed:19097185). In the brain, expression is restricted to the epiphysis and a cluster of cells in the posterior hindbrain (PubMed:19097185). In the retina, appears in the outer part and extends inwards (PubMed:19097185). Also detected in the cornea, the lens and in the region of photoreceptor cell differentiation in the retina (PubMed:19097185).</text>
</comment>
<comment type="disruption phenotype">
    <text evidence="6">Fishes lacking both nectin1a and nectin1b leads to defects in cell adhesion upon serum depletion (PubMed:36229674). The absence of nectin1a and nectin1b also promotes melanoma spreading in melanoma models (PubMed:36229674).</text>
</comment>
<comment type="similarity">
    <text evidence="8">Belongs to the nectin family.</text>
</comment>
<proteinExistence type="evidence at transcript level"/>
<accession>A0A8M2B818</accession>
<accession>A0A8M2B8A6</accession>
<accession>B0JYH7</accession>
<feature type="signal peptide" evidence="2">
    <location>
        <begin position="1"/>
        <end position="20"/>
    </location>
</feature>
<feature type="chain" id="PRO_5035480915" description="Nectin 1a" evidence="2">
    <location>
        <begin position="21"/>
        <end position="496"/>
    </location>
</feature>
<feature type="topological domain" description="Extracellular" evidence="8">
    <location>
        <begin position="21"/>
        <end position="349"/>
    </location>
</feature>
<feature type="transmembrane region" description="Helical" evidence="2">
    <location>
        <begin position="350"/>
        <end position="370"/>
    </location>
</feature>
<feature type="topological domain" description="Cytoplasmic" evidence="8">
    <location>
        <begin position="371"/>
        <end position="496"/>
    </location>
</feature>
<feature type="domain" description="Ig-like V-type" evidence="3">
    <location>
        <begin position="34"/>
        <end position="138"/>
    </location>
</feature>
<feature type="domain" description="Ig-like C2-type 1" evidence="3">
    <location>
        <begin position="143"/>
        <end position="238"/>
    </location>
</feature>
<feature type="domain" description="Ig-like C2-type 2" evidence="3">
    <location>
        <begin position="243"/>
        <end position="330"/>
    </location>
</feature>
<feature type="glycosylation site" description="N-linked (GlcNAc...) asparagine" evidence="4">
    <location>
        <position position="62"/>
    </location>
</feature>
<feature type="glycosylation site" description="N-linked (GlcNAc...) asparagine" evidence="4">
    <location>
        <position position="136"/>
    </location>
</feature>
<feature type="glycosylation site" description="N-linked (GlcNAc...) asparagine" evidence="4">
    <location>
        <position position="282"/>
    </location>
</feature>
<feature type="disulfide bond" evidence="3">
    <location>
        <begin position="41"/>
        <end position="121"/>
    </location>
</feature>
<feature type="disulfide bond" evidence="3">
    <location>
        <begin position="168"/>
        <end position="222"/>
    </location>
</feature>
<feature type="disulfide bond" evidence="3">
    <location>
        <begin position="265"/>
        <end position="312"/>
    </location>
</feature>
<feature type="sequence conflict" description="In Ref. 2; AAX68497." evidence="8" ref="2">
    <original>F</original>
    <variation>L</variation>
    <location>
        <position position="208"/>
    </location>
</feature>
<feature type="sequence conflict" description="In Ref. 2; AAX68497." evidence="8" ref="2">
    <original>E</original>
    <variation>D</variation>
    <location>
        <position position="228"/>
    </location>
</feature>
<protein>
    <recommendedName>
        <fullName evidence="7">Nectin 1a</fullName>
    </recommendedName>
</protein>
<organism>
    <name type="scientific">Danio rerio</name>
    <name type="common">Zebrafish</name>
    <name type="synonym">Brachydanio rerio</name>
    <dbReference type="NCBI Taxonomy" id="7955"/>
    <lineage>
        <taxon>Eukaryota</taxon>
        <taxon>Metazoa</taxon>
        <taxon>Chordata</taxon>
        <taxon>Craniata</taxon>
        <taxon>Vertebrata</taxon>
        <taxon>Euteleostomi</taxon>
        <taxon>Actinopterygii</taxon>
        <taxon>Neopterygii</taxon>
        <taxon>Teleostei</taxon>
        <taxon>Ostariophysi</taxon>
        <taxon>Cypriniformes</taxon>
        <taxon>Danionidae</taxon>
        <taxon>Danioninae</taxon>
        <taxon>Danio</taxon>
    </lineage>
</organism>
<sequence length="496" mass="55166">MMFINLLLRLMCVFLIGADGQMVQMESSKAGFVGSQVELPCQFVNSNPPVKISQVTWQKLVNGTKQNVAIANPALGVSVLNPFRERVRFKNPAVRQRTPSLEDTTIVFNRLKLTDESTYICEYTTFPAGNRENMVNLTVFARPMIQMSLSTPSIVAGSKDLKMTVATCVSANGKPASVITWETDLDGESNTQEISNPDGTVTVRSDYFVVPSREIHQQLLTCISTYNEEQYTDSVTLNIQYEPEVIIEGFDGNWYLNRENVQLTCLADANPTISLYQWRYLNGTLPSSAELRDDVLIFKGPVTYDIAGTYVCDATNSIGSGSASVEVIVTEFPSYPHEVFQDQQQAGVVIGGAVVCGTVLLAAVTLLVVFLYRRRCMFKGDYSTKKQILGNGYSKAGNVPSHPSLPHSLTFSDDSDEEKKLELYRGSSILGGSVQEFHTCHDSRIKAYRTGLIEEHERCAFNEQTYIYEYGSEVEVSVDMIPQMDGSVISKEEWYV</sequence>
<keyword id="KW-0130">Cell adhesion</keyword>
<keyword id="KW-0965">Cell junction</keyword>
<keyword id="KW-1003">Cell membrane</keyword>
<keyword id="KW-1015">Disulfide bond</keyword>
<keyword id="KW-0325">Glycoprotein</keyword>
<keyword id="KW-0472">Membrane</keyword>
<keyword id="KW-1185">Reference proteome</keyword>
<keyword id="KW-0677">Repeat</keyword>
<keyword id="KW-0732">Signal</keyword>
<keyword id="KW-0812">Transmembrane</keyword>
<keyword id="KW-1133">Transmembrane helix</keyword>
<dbReference type="EMBL" id="BX510940">
    <property type="status" value="NOT_ANNOTATED_CDS"/>
    <property type="molecule type" value="Genomic_DNA"/>
</dbReference>
<dbReference type="EMBL" id="AY881625">
    <property type="protein sequence ID" value="AAX68497.2"/>
    <property type="molecule type" value="mRNA"/>
</dbReference>
<dbReference type="RefSeq" id="NP_001161042.1">
    <property type="nucleotide sequence ID" value="NM_001167570.1"/>
</dbReference>
<dbReference type="RefSeq" id="XP_005161186.1">
    <property type="nucleotide sequence ID" value="XM_005161129.5"/>
</dbReference>
<dbReference type="SMR" id="A0A8M2B818"/>
<dbReference type="GeneID" id="100136836"/>
<dbReference type="KEGG" id="dre:100136836"/>
<dbReference type="AGR" id="ZFIN:ZDB-GENE-090224-1"/>
<dbReference type="CTD" id="100136836"/>
<dbReference type="ZFIN" id="ZDB-GENE-090224-1">
    <property type="gene designation" value="nectin1a"/>
</dbReference>
<dbReference type="OrthoDB" id="8718740at2759"/>
<dbReference type="Proteomes" id="UP000000437">
    <property type="component" value="Alternate scaffold 21"/>
</dbReference>
<dbReference type="Proteomes" id="UP000000437">
    <property type="component" value="Chromosome 21"/>
</dbReference>
<dbReference type="GO" id="GO:0005912">
    <property type="term" value="C:adherens junction"/>
    <property type="evidence" value="ECO:0007669"/>
    <property type="project" value="UniProtKB-SubCell"/>
</dbReference>
<dbReference type="GO" id="GO:0005886">
    <property type="term" value="C:plasma membrane"/>
    <property type="evidence" value="ECO:0000250"/>
    <property type="project" value="UniProtKB"/>
</dbReference>
<dbReference type="GO" id="GO:0098631">
    <property type="term" value="F:cell adhesion mediator activity"/>
    <property type="evidence" value="ECO:0000250"/>
    <property type="project" value="UniProtKB"/>
</dbReference>
<dbReference type="GO" id="GO:0007157">
    <property type="term" value="P:heterophilic cell-cell adhesion via plasma membrane cell adhesion molecules"/>
    <property type="evidence" value="ECO:0000250"/>
    <property type="project" value="UniProtKB"/>
</dbReference>
<dbReference type="GO" id="GO:0007156">
    <property type="term" value="P:homophilic cell adhesion via plasma membrane adhesion molecules"/>
    <property type="evidence" value="ECO:0000250"/>
    <property type="project" value="UniProtKB"/>
</dbReference>
<dbReference type="GO" id="GO:1903929">
    <property type="term" value="P:primary palate development"/>
    <property type="evidence" value="ECO:0000315"/>
    <property type="project" value="ZFIN"/>
</dbReference>
<dbReference type="FunFam" id="2.60.40.10:FF:000304">
    <property type="entry name" value="Nectin cell adhesion molecule 1"/>
    <property type="match status" value="1"/>
</dbReference>
<dbReference type="Gene3D" id="2.60.40.10">
    <property type="entry name" value="Immunoglobulins"/>
    <property type="match status" value="3"/>
</dbReference>
<dbReference type="InterPro" id="IPR013162">
    <property type="entry name" value="CD80_C2-set"/>
</dbReference>
<dbReference type="InterPro" id="IPR007110">
    <property type="entry name" value="Ig-like_dom"/>
</dbReference>
<dbReference type="InterPro" id="IPR036179">
    <property type="entry name" value="Ig-like_dom_sf"/>
</dbReference>
<dbReference type="InterPro" id="IPR013783">
    <property type="entry name" value="Ig-like_fold"/>
</dbReference>
<dbReference type="InterPro" id="IPR003599">
    <property type="entry name" value="Ig_sub"/>
</dbReference>
<dbReference type="InterPro" id="IPR013106">
    <property type="entry name" value="Ig_V-set"/>
</dbReference>
<dbReference type="InterPro" id="IPR051427">
    <property type="entry name" value="Nectin/Nectin-like"/>
</dbReference>
<dbReference type="PANTHER" id="PTHR23277:SF69">
    <property type="entry name" value="NECTIN-1"/>
    <property type="match status" value="1"/>
</dbReference>
<dbReference type="PANTHER" id="PTHR23277">
    <property type="entry name" value="NECTIN-RELATED"/>
    <property type="match status" value="1"/>
</dbReference>
<dbReference type="Pfam" id="PF08205">
    <property type="entry name" value="C2-set_2"/>
    <property type="match status" value="1"/>
</dbReference>
<dbReference type="Pfam" id="PF13895">
    <property type="entry name" value="Ig_2"/>
    <property type="match status" value="1"/>
</dbReference>
<dbReference type="Pfam" id="PF07686">
    <property type="entry name" value="V-set"/>
    <property type="match status" value="1"/>
</dbReference>
<dbReference type="SMART" id="SM00409">
    <property type="entry name" value="IG"/>
    <property type="match status" value="2"/>
</dbReference>
<dbReference type="SUPFAM" id="SSF48726">
    <property type="entry name" value="Immunoglobulin"/>
    <property type="match status" value="2"/>
</dbReference>
<dbReference type="PROSITE" id="PS50835">
    <property type="entry name" value="IG_LIKE"/>
    <property type="match status" value="3"/>
</dbReference>
<gene>
    <name evidence="7" type="primary">nectin1a</name>
    <name type="synonym">pvrl1a</name>
</gene>
<name>NEC1A_DANRE</name>
<reference key="1">
    <citation type="journal article" date="2013" name="Nature">
        <title>The zebrafish reference genome sequence and its relationship to the human genome.</title>
        <authorList>
            <person name="Howe K."/>
            <person name="Clark M.D."/>
            <person name="Torroja C.F."/>
            <person name="Torrance J."/>
            <person name="Berthelot C."/>
            <person name="Muffato M."/>
            <person name="Collins J.E."/>
            <person name="Humphray S."/>
            <person name="McLaren K."/>
            <person name="Matthews L."/>
            <person name="McLaren S."/>
            <person name="Sealy I."/>
            <person name="Caccamo M."/>
            <person name="Churcher C."/>
            <person name="Scott C."/>
            <person name="Barrett J.C."/>
            <person name="Koch R."/>
            <person name="Rauch G.J."/>
            <person name="White S."/>
            <person name="Chow W."/>
            <person name="Kilian B."/>
            <person name="Quintais L.T."/>
            <person name="Guerra-Assuncao J.A."/>
            <person name="Zhou Y."/>
            <person name="Gu Y."/>
            <person name="Yen J."/>
            <person name="Vogel J.H."/>
            <person name="Eyre T."/>
            <person name="Redmond S."/>
            <person name="Banerjee R."/>
            <person name="Chi J."/>
            <person name="Fu B."/>
            <person name="Langley E."/>
            <person name="Maguire S.F."/>
            <person name="Laird G.K."/>
            <person name="Lloyd D."/>
            <person name="Kenyon E."/>
            <person name="Donaldson S."/>
            <person name="Sehra H."/>
            <person name="Almeida-King J."/>
            <person name="Loveland J."/>
            <person name="Trevanion S."/>
            <person name="Jones M."/>
            <person name="Quail M."/>
            <person name="Willey D."/>
            <person name="Hunt A."/>
            <person name="Burton J."/>
            <person name="Sims S."/>
            <person name="McLay K."/>
            <person name="Plumb B."/>
            <person name="Davis J."/>
            <person name="Clee C."/>
            <person name="Oliver K."/>
            <person name="Clark R."/>
            <person name="Riddle C."/>
            <person name="Elliot D."/>
            <person name="Threadgold G."/>
            <person name="Harden G."/>
            <person name="Ware D."/>
            <person name="Begum S."/>
            <person name="Mortimore B."/>
            <person name="Kerry G."/>
            <person name="Heath P."/>
            <person name="Phillimore B."/>
            <person name="Tracey A."/>
            <person name="Corby N."/>
            <person name="Dunn M."/>
            <person name="Johnson C."/>
            <person name="Wood J."/>
            <person name="Clark S."/>
            <person name="Pelan S."/>
            <person name="Griffiths G."/>
            <person name="Smith M."/>
            <person name="Glithero R."/>
            <person name="Howden P."/>
            <person name="Barker N."/>
            <person name="Lloyd C."/>
            <person name="Stevens C."/>
            <person name="Harley J."/>
            <person name="Holt K."/>
            <person name="Panagiotidis G."/>
            <person name="Lovell J."/>
            <person name="Beasley H."/>
            <person name="Henderson C."/>
            <person name="Gordon D."/>
            <person name="Auger K."/>
            <person name="Wright D."/>
            <person name="Collins J."/>
            <person name="Raisen C."/>
            <person name="Dyer L."/>
            <person name="Leung K."/>
            <person name="Robertson L."/>
            <person name="Ambridge K."/>
            <person name="Leongamornlert D."/>
            <person name="McGuire S."/>
            <person name="Gilderthorp R."/>
            <person name="Griffiths C."/>
            <person name="Manthravadi D."/>
            <person name="Nichol S."/>
            <person name="Barker G."/>
            <person name="Whitehead S."/>
            <person name="Kay M."/>
            <person name="Brown J."/>
            <person name="Murnane C."/>
            <person name="Gray E."/>
            <person name="Humphries M."/>
            <person name="Sycamore N."/>
            <person name="Barker D."/>
            <person name="Saunders D."/>
            <person name="Wallis J."/>
            <person name="Babbage A."/>
            <person name="Hammond S."/>
            <person name="Mashreghi-Mohammadi M."/>
            <person name="Barr L."/>
            <person name="Martin S."/>
            <person name="Wray P."/>
            <person name="Ellington A."/>
            <person name="Matthews N."/>
            <person name="Ellwood M."/>
            <person name="Woodmansey R."/>
            <person name="Clark G."/>
            <person name="Cooper J."/>
            <person name="Tromans A."/>
            <person name="Grafham D."/>
            <person name="Skuce C."/>
            <person name="Pandian R."/>
            <person name="Andrews R."/>
            <person name="Harrison E."/>
            <person name="Kimberley A."/>
            <person name="Garnett J."/>
            <person name="Fosker N."/>
            <person name="Hall R."/>
            <person name="Garner P."/>
            <person name="Kelly D."/>
            <person name="Bird C."/>
            <person name="Palmer S."/>
            <person name="Gehring I."/>
            <person name="Berger A."/>
            <person name="Dooley C.M."/>
            <person name="Ersan-Urun Z."/>
            <person name="Eser C."/>
            <person name="Geiger H."/>
            <person name="Geisler M."/>
            <person name="Karotki L."/>
            <person name="Kirn A."/>
            <person name="Konantz J."/>
            <person name="Konantz M."/>
            <person name="Oberlander M."/>
            <person name="Rudolph-Geiger S."/>
            <person name="Teucke M."/>
            <person name="Lanz C."/>
            <person name="Raddatz G."/>
            <person name="Osoegawa K."/>
            <person name="Zhu B."/>
            <person name="Rapp A."/>
            <person name="Widaa S."/>
            <person name="Langford C."/>
            <person name="Yang F."/>
            <person name="Schuster S.C."/>
            <person name="Carter N.P."/>
            <person name="Harrow J."/>
            <person name="Ning Z."/>
            <person name="Herrero J."/>
            <person name="Searle S.M."/>
            <person name="Enright A."/>
            <person name="Geisler R."/>
            <person name="Plasterk R.H."/>
            <person name="Lee C."/>
            <person name="Westerfield M."/>
            <person name="de Jong P.J."/>
            <person name="Zon L.I."/>
            <person name="Postlethwait J.H."/>
            <person name="Nusslein-Volhard C."/>
            <person name="Hubbard T.J."/>
            <person name="Roest Crollius H."/>
            <person name="Rogers J."/>
            <person name="Stemple D.L."/>
        </authorList>
    </citation>
    <scope>NUCLEOTIDE SEQUENCE [LARGE SCALE GENOMIC DNA]</scope>
    <source>
        <strain>Tuebingen</strain>
    </source>
</reference>
<reference key="2">
    <citation type="journal article" date="2009" name="Dev. Dyn.">
        <title>Identification and characterization of two zebrafish nectin-1 genes that are differentially expressed in the developing eye and brain.</title>
        <authorList>
            <person name="Helvik J.V."/>
            <person name="Roedahl E."/>
            <person name="Drivenes O."/>
            <person name="Haarr L."/>
        </authorList>
    </citation>
    <scope>NUCLEOTIDE SEQUENCE [GENOMIC DNA] OF 22-496</scope>
    <scope>TISSUE SPECIFICITY</scope>
    <scope>DEVELOPMENTAL STAGE</scope>
</reference>
<reference key="3">
    <citation type="journal article" date="2022" name="Nat. Genet.">
        <title>Loss of NECTIN1 triggers melanoma dissemination upon local IGF1 depletion.</title>
        <authorList>
            <person name="Ablain J."/>
            <person name="Al Mahi A."/>
            <person name="Rothschild H."/>
            <person name="Prasad M."/>
            <person name="Aires S."/>
            <person name="Yang S."/>
            <person name="Dokukin M.E."/>
            <person name="Xu S."/>
            <person name="Dang M."/>
            <person name="Sokolov I."/>
            <person name="Lian C.G."/>
            <person name="Zon L.I."/>
        </authorList>
    </citation>
    <scope>FUNCTION</scope>
    <scope>DISRUPTION PHENOTYPE</scope>
</reference>
<evidence type="ECO:0000250" key="1">
    <source>
        <dbReference type="UniProtKB" id="Q15223"/>
    </source>
</evidence>
<evidence type="ECO:0000255" key="2"/>
<evidence type="ECO:0000255" key="3">
    <source>
        <dbReference type="PROSITE-ProRule" id="PRU00114"/>
    </source>
</evidence>
<evidence type="ECO:0000255" key="4">
    <source>
        <dbReference type="PROSITE-ProRule" id="PRU00498"/>
    </source>
</evidence>
<evidence type="ECO:0000269" key="5">
    <source>
    </source>
</evidence>
<evidence type="ECO:0000269" key="6">
    <source>
    </source>
</evidence>
<evidence type="ECO:0000303" key="7">
    <source>
    </source>
</evidence>
<evidence type="ECO:0000305" key="8"/>